<organism>
    <name type="scientific">Clostridium botulinum (strain Okra / Type B1)</name>
    <dbReference type="NCBI Taxonomy" id="498213"/>
    <lineage>
        <taxon>Bacteria</taxon>
        <taxon>Bacillati</taxon>
        <taxon>Bacillota</taxon>
        <taxon>Clostridia</taxon>
        <taxon>Eubacteriales</taxon>
        <taxon>Clostridiaceae</taxon>
        <taxon>Clostridium</taxon>
    </lineage>
</organism>
<gene>
    <name evidence="1" type="primary">panC</name>
    <name type="ordered locus">CLD_0319</name>
</gene>
<sequence>MNIVNTIKDVKLIIKKWKDENLSIGYVPTMGYLHEGHASLIKKAREENDKVIVSIFVNPIQFGPKEDYSTYPRDLVKDSSLCEKFGVDLIFNPETSEMYPNKIYSHINVDILTENLCGEKRPGHFQGVCTVLTKFFNILNPTKAYLGEKDAQQLAVVRKMVEDLNFPIEIIGCPIIREEDGLAKSSRNAYLNKQERKSALILNKSLKEALNALESGEKNSNNIRDIIVSKLNKEPLAKIDYVSIVDSITLQSVEKIQSSILVAIAVYIGKTRLIDNFTFKL</sequence>
<proteinExistence type="inferred from homology"/>
<comment type="function">
    <text evidence="1">Catalyzes the condensation of pantoate with beta-alanine in an ATP-dependent reaction via a pantoyl-adenylate intermediate.</text>
</comment>
<comment type="catalytic activity">
    <reaction evidence="1">
        <text>(R)-pantoate + beta-alanine + ATP = (R)-pantothenate + AMP + diphosphate + H(+)</text>
        <dbReference type="Rhea" id="RHEA:10912"/>
        <dbReference type="ChEBI" id="CHEBI:15378"/>
        <dbReference type="ChEBI" id="CHEBI:15980"/>
        <dbReference type="ChEBI" id="CHEBI:29032"/>
        <dbReference type="ChEBI" id="CHEBI:30616"/>
        <dbReference type="ChEBI" id="CHEBI:33019"/>
        <dbReference type="ChEBI" id="CHEBI:57966"/>
        <dbReference type="ChEBI" id="CHEBI:456215"/>
        <dbReference type="EC" id="6.3.2.1"/>
    </reaction>
</comment>
<comment type="pathway">
    <text evidence="1">Cofactor biosynthesis; (R)-pantothenate biosynthesis; (R)-pantothenate from (R)-pantoate and beta-alanine: step 1/1.</text>
</comment>
<comment type="subunit">
    <text evidence="1">Homodimer.</text>
</comment>
<comment type="subcellular location">
    <subcellularLocation>
        <location evidence="1">Cytoplasm</location>
    </subcellularLocation>
</comment>
<comment type="miscellaneous">
    <text evidence="1">The reaction proceeds by a bi uni uni bi ping pong mechanism.</text>
</comment>
<comment type="similarity">
    <text evidence="1">Belongs to the pantothenate synthetase family.</text>
</comment>
<accession>B1IEL5</accession>
<feature type="chain" id="PRO_1000097050" description="Pantothenate synthetase">
    <location>
        <begin position="1"/>
        <end position="281"/>
    </location>
</feature>
<feature type="active site" description="Proton donor" evidence="1">
    <location>
        <position position="37"/>
    </location>
</feature>
<feature type="binding site" evidence="1">
    <location>
        <begin position="30"/>
        <end position="37"/>
    </location>
    <ligand>
        <name>ATP</name>
        <dbReference type="ChEBI" id="CHEBI:30616"/>
    </ligand>
</feature>
<feature type="binding site" evidence="1">
    <location>
        <position position="61"/>
    </location>
    <ligand>
        <name>(R)-pantoate</name>
        <dbReference type="ChEBI" id="CHEBI:15980"/>
    </ligand>
</feature>
<feature type="binding site" evidence="1">
    <location>
        <position position="61"/>
    </location>
    <ligand>
        <name>beta-alanine</name>
        <dbReference type="ChEBI" id="CHEBI:57966"/>
    </ligand>
</feature>
<feature type="binding site" evidence="1">
    <location>
        <begin position="147"/>
        <end position="150"/>
    </location>
    <ligand>
        <name>ATP</name>
        <dbReference type="ChEBI" id="CHEBI:30616"/>
    </ligand>
</feature>
<feature type="binding site" evidence="1">
    <location>
        <position position="153"/>
    </location>
    <ligand>
        <name>(R)-pantoate</name>
        <dbReference type="ChEBI" id="CHEBI:15980"/>
    </ligand>
</feature>
<feature type="binding site" evidence="1">
    <location>
        <position position="176"/>
    </location>
    <ligand>
        <name>ATP</name>
        <dbReference type="ChEBI" id="CHEBI:30616"/>
    </ligand>
</feature>
<feature type="binding site" evidence="1">
    <location>
        <begin position="184"/>
        <end position="187"/>
    </location>
    <ligand>
        <name>ATP</name>
        <dbReference type="ChEBI" id="CHEBI:30616"/>
    </ligand>
</feature>
<evidence type="ECO:0000255" key="1">
    <source>
        <dbReference type="HAMAP-Rule" id="MF_00158"/>
    </source>
</evidence>
<name>PANC_CLOBK</name>
<reference key="1">
    <citation type="journal article" date="2007" name="PLoS ONE">
        <title>Analysis of the neurotoxin complex genes in Clostridium botulinum A1-A4 and B1 strains: BoNT/A3, /Ba4 and /B1 clusters are located within plasmids.</title>
        <authorList>
            <person name="Smith T.J."/>
            <person name="Hill K.K."/>
            <person name="Foley B.T."/>
            <person name="Detter J.C."/>
            <person name="Munk A.C."/>
            <person name="Bruce D.C."/>
            <person name="Doggett N.A."/>
            <person name="Smith L.A."/>
            <person name="Marks J.D."/>
            <person name="Xie G."/>
            <person name="Brettin T.S."/>
        </authorList>
    </citation>
    <scope>NUCLEOTIDE SEQUENCE [LARGE SCALE GENOMIC DNA]</scope>
    <source>
        <strain>Okra / Type B1</strain>
    </source>
</reference>
<protein>
    <recommendedName>
        <fullName evidence="1">Pantothenate synthetase</fullName>
        <shortName evidence="1">PS</shortName>
        <ecNumber evidence="1">6.3.2.1</ecNumber>
    </recommendedName>
    <alternativeName>
        <fullName evidence="1">Pantoate--beta-alanine ligase</fullName>
    </alternativeName>
    <alternativeName>
        <fullName evidence="1">Pantoate-activating enzyme</fullName>
    </alternativeName>
</protein>
<dbReference type="EC" id="6.3.2.1" evidence="1"/>
<dbReference type="EMBL" id="CP000939">
    <property type="protein sequence ID" value="ACA46763.1"/>
    <property type="molecule type" value="Genomic_DNA"/>
</dbReference>
<dbReference type="RefSeq" id="WP_003399594.1">
    <property type="nucleotide sequence ID" value="NC_010516.1"/>
</dbReference>
<dbReference type="SMR" id="B1IEL5"/>
<dbReference type="KEGG" id="cbb:CLD_0319"/>
<dbReference type="HOGENOM" id="CLU_047148_0_0_9"/>
<dbReference type="UniPathway" id="UPA00028">
    <property type="reaction ID" value="UER00005"/>
</dbReference>
<dbReference type="Proteomes" id="UP000008541">
    <property type="component" value="Chromosome"/>
</dbReference>
<dbReference type="GO" id="GO:0005829">
    <property type="term" value="C:cytosol"/>
    <property type="evidence" value="ECO:0007669"/>
    <property type="project" value="TreeGrafter"/>
</dbReference>
<dbReference type="GO" id="GO:0005524">
    <property type="term" value="F:ATP binding"/>
    <property type="evidence" value="ECO:0007669"/>
    <property type="project" value="UniProtKB-KW"/>
</dbReference>
<dbReference type="GO" id="GO:0004592">
    <property type="term" value="F:pantoate-beta-alanine ligase activity"/>
    <property type="evidence" value="ECO:0007669"/>
    <property type="project" value="UniProtKB-UniRule"/>
</dbReference>
<dbReference type="GO" id="GO:0015940">
    <property type="term" value="P:pantothenate biosynthetic process"/>
    <property type="evidence" value="ECO:0007669"/>
    <property type="project" value="UniProtKB-UniRule"/>
</dbReference>
<dbReference type="CDD" id="cd00560">
    <property type="entry name" value="PanC"/>
    <property type="match status" value="1"/>
</dbReference>
<dbReference type="FunFam" id="3.30.1300.10:FF:000001">
    <property type="entry name" value="Pantothenate synthetase"/>
    <property type="match status" value="1"/>
</dbReference>
<dbReference type="FunFam" id="3.40.50.620:FF:000013">
    <property type="entry name" value="Pantothenate synthetase"/>
    <property type="match status" value="1"/>
</dbReference>
<dbReference type="Gene3D" id="3.40.50.620">
    <property type="entry name" value="HUPs"/>
    <property type="match status" value="1"/>
</dbReference>
<dbReference type="Gene3D" id="3.30.1300.10">
    <property type="entry name" value="Pantoate-beta-alanine ligase, C-terminal domain"/>
    <property type="match status" value="1"/>
</dbReference>
<dbReference type="HAMAP" id="MF_00158">
    <property type="entry name" value="PanC"/>
    <property type="match status" value="1"/>
</dbReference>
<dbReference type="InterPro" id="IPR004821">
    <property type="entry name" value="Cyt_trans-like"/>
</dbReference>
<dbReference type="InterPro" id="IPR003721">
    <property type="entry name" value="Pantoate_ligase"/>
</dbReference>
<dbReference type="InterPro" id="IPR042176">
    <property type="entry name" value="Pantoate_ligase_C"/>
</dbReference>
<dbReference type="InterPro" id="IPR014729">
    <property type="entry name" value="Rossmann-like_a/b/a_fold"/>
</dbReference>
<dbReference type="NCBIfam" id="TIGR00125">
    <property type="entry name" value="cyt_tran_rel"/>
    <property type="match status" value="1"/>
</dbReference>
<dbReference type="NCBIfam" id="TIGR00018">
    <property type="entry name" value="panC"/>
    <property type="match status" value="1"/>
</dbReference>
<dbReference type="PANTHER" id="PTHR21299">
    <property type="entry name" value="CYTIDYLATE KINASE/PANTOATE-BETA-ALANINE LIGASE"/>
    <property type="match status" value="1"/>
</dbReference>
<dbReference type="PANTHER" id="PTHR21299:SF1">
    <property type="entry name" value="PANTOATE--BETA-ALANINE LIGASE"/>
    <property type="match status" value="1"/>
</dbReference>
<dbReference type="Pfam" id="PF02569">
    <property type="entry name" value="Pantoate_ligase"/>
    <property type="match status" value="1"/>
</dbReference>
<dbReference type="SUPFAM" id="SSF52374">
    <property type="entry name" value="Nucleotidylyl transferase"/>
    <property type="match status" value="1"/>
</dbReference>
<keyword id="KW-0067">ATP-binding</keyword>
<keyword id="KW-0963">Cytoplasm</keyword>
<keyword id="KW-0436">Ligase</keyword>
<keyword id="KW-0547">Nucleotide-binding</keyword>
<keyword id="KW-0566">Pantothenate biosynthesis</keyword>